<dbReference type="EC" id="3.1.26.5" evidence="1"/>
<dbReference type="EMBL" id="CU928160">
    <property type="protein sequence ID" value="CAR00678.1"/>
    <property type="molecule type" value="Genomic_DNA"/>
</dbReference>
<dbReference type="RefSeq" id="WP_000239730.1">
    <property type="nucleotide sequence ID" value="NC_011741.1"/>
</dbReference>
<dbReference type="SMR" id="B7M556"/>
<dbReference type="GeneID" id="93778446"/>
<dbReference type="KEGG" id="ecr:ECIAI1_3883"/>
<dbReference type="HOGENOM" id="CLU_117179_11_0_6"/>
<dbReference type="GO" id="GO:0030677">
    <property type="term" value="C:ribonuclease P complex"/>
    <property type="evidence" value="ECO:0007669"/>
    <property type="project" value="TreeGrafter"/>
</dbReference>
<dbReference type="GO" id="GO:0042781">
    <property type="term" value="F:3'-tRNA processing endoribonuclease activity"/>
    <property type="evidence" value="ECO:0007669"/>
    <property type="project" value="TreeGrafter"/>
</dbReference>
<dbReference type="GO" id="GO:0004526">
    <property type="term" value="F:ribonuclease P activity"/>
    <property type="evidence" value="ECO:0007669"/>
    <property type="project" value="UniProtKB-UniRule"/>
</dbReference>
<dbReference type="GO" id="GO:0000049">
    <property type="term" value="F:tRNA binding"/>
    <property type="evidence" value="ECO:0007669"/>
    <property type="project" value="UniProtKB-UniRule"/>
</dbReference>
<dbReference type="GO" id="GO:0001682">
    <property type="term" value="P:tRNA 5'-leader removal"/>
    <property type="evidence" value="ECO:0007669"/>
    <property type="project" value="UniProtKB-UniRule"/>
</dbReference>
<dbReference type="FunFam" id="3.30.230.10:FF:000016">
    <property type="entry name" value="Ribonuclease P protein component"/>
    <property type="match status" value="1"/>
</dbReference>
<dbReference type="Gene3D" id="3.30.230.10">
    <property type="match status" value="1"/>
</dbReference>
<dbReference type="HAMAP" id="MF_00227">
    <property type="entry name" value="RNase_P"/>
    <property type="match status" value="1"/>
</dbReference>
<dbReference type="InterPro" id="IPR020568">
    <property type="entry name" value="Ribosomal_Su5_D2-typ_SF"/>
</dbReference>
<dbReference type="InterPro" id="IPR014721">
    <property type="entry name" value="Ribsml_uS5_D2-typ_fold_subgr"/>
</dbReference>
<dbReference type="InterPro" id="IPR000100">
    <property type="entry name" value="RNase_P"/>
</dbReference>
<dbReference type="InterPro" id="IPR020539">
    <property type="entry name" value="RNase_P_CS"/>
</dbReference>
<dbReference type="NCBIfam" id="TIGR00188">
    <property type="entry name" value="rnpA"/>
    <property type="match status" value="1"/>
</dbReference>
<dbReference type="PANTHER" id="PTHR33992">
    <property type="entry name" value="RIBONUCLEASE P PROTEIN COMPONENT"/>
    <property type="match status" value="1"/>
</dbReference>
<dbReference type="PANTHER" id="PTHR33992:SF1">
    <property type="entry name" value="RIBONUCLEASE P PROTEIN COMPONENT"/>
    <property type="match status" value="1"/>
</dbReference>
<dbReference type="Pfam" id="PF00825">
    <property type="entry name" value="Ribonuclease_P"/>
    <property type="match status" value="1"/>
</dbReference>
<dbReference type="SUPFAM" id="SSF54211">
    <property type="entry name" value="Ribosomal protein S5 domain 2-like"/>
    <property type="match status" value="1"/>
</dbReference>
<dbReference type="PROSITE" id="PS00648">
    <property type="entry name" value="RIBONUCLEASE_P"/>
    <property type="match status" value="1"/>
</dbReference>
<keyword id="KW-0255">Endonuclease</keyword>
<keyword id="KW-0378">Hydrolase</keyword>
<keyword id="KW-0540">Nuclease</keyword>
<keyword id="KW-0694">RNA-binding</keyword>
<keyword id="KW-0819">tRNA processing</keyword>
<evidence type="ECO:0000255" key="1">
    <source>
        <dbReference type="HAMAP-Rule" id="MF_00227"/>
    </source>
</evidence>
<feature type="chain" id="PRO_1000194641" description="Ribonuclease P protein component">
    <location>
        <begin position="1"/>
        <end position="119"/>
    </location>
</feature>
<reference key="1">
    <citation type="journal article" date="2009" name="PLoS Genet.">
        <title>Organised genome dynamics in the Escherichia coli species results in highly diverse adaptive paths.</title>
        <authorList>
            <person name="Touchon M."/>
            <person name="Hoede C."/>
            <person name="Tenaillon O."/>
            <person name="Barbe V."/>
            <person name="Baeriswyl S."/>
            <person name="Bidet P."/>
            <person name="Bingen E."/>
            <person name="Bonacorsi S."/>
            <person name="Bouchier C."/>
            <person name="Bouvet O."/>
            <person name="Calteau A."/>
            <person name="Chiapello H."/>
            <person name="Clermont O."/>
            <person name="Cruveiller S."/>
            <person name="Danchin A."/>
            <person name="Diard M."/>
            <person name="Dossat C."/>
            <person name="Karoui M.E."/>
            <person name="Frapy E."/>
            <person name="Garry L."/>
            <person name="Ghigo J.M."/>
            <person name="Gilles A.M."/>
            <person name="Johnson J."/>
            <person name="Le Bouguenec C."/>
            <person name="Lescat M."/>
            <person name="Mangenot S."/>
            <person name="Martinez-Jehanne V."/>
            <person name="Matic I."/>
            <person name="Nassif X."/>
            <person name="Oztas S."/>
            <person name="Petit M.A."/>
            <person name="Pichon C."/>
            <person name="Rouy Z."/>
            <person name="Ruf C.S."/>
            <person name="Schneider D."/>
            <person name="Tourret J."/>
            <person name="Vacherie B."/>
            <person name="Vallenet D."/>
            <person name="Medigue C."/>
            <person name="Rocha E.P.C."/>
            <person name="Denamur E."/>
        </authorList>
    </citation>
    <scope>NUCLEOTIDE SEQUENCE [LARGE SCALE GENOMIC DNA]</scope>
    <source>
        <strain>IAI1</strain>
    </source>
</reference>
<protein>
    <recommendedName>
        <fullName evidence="1">Ribonuclease P protein component</fullName>
        <shortName evidence="1">RNase P protein</shortName>
        <shortName evidence="1">RNaseP protein</shortName>
        <ecNumber evidence="1">3.1.26.5</ecNumber>
    </recommendedName>
    <alternativeName>
        <fullName evidence="1">Protein C5</fullName>
    </alternativeName>
</protein>
<sequence>MVKLAFPRELRLLTPSQFTFVFQQPQRAGTPQITILGRLNSLGHPRIGLTVAKKNVRRAHERNRIKRLTRESFRLRQHELPAMDFVVVAKKGVADLDNRALSEALEKLWRRHCRLARGS</sequence>
<accession>B7M556</accession>
<gene>
    <name evidence="1" type="primary">rnpA</name>
    <name type="ordered locus">ECIAI1_3883</name>
</gene>
<organism>
    <name type="scientific">Escherichia coli O8 (strain IAI1)</name>
    <dbReference type="NCBI Taxonomy" id="585034"/>
    <lineage>
        <taxon>Bacteria</taxon>
        <taxon>Pseudomonadati</taxon>
        <taxon>Pseudomonadota</taxon>
        <taxon>Gammaproteobacteria</taxon>
        <taxon>Enterobacterales</taxon>
        <taxon>Enterobacteriaceae</taxon>
        <taxon>Escherichia</taxon>
    </lineage>
</organism>
<proteinExistence type="inferred from homology"/>
<name>RNPA_ECO8A</name>
<comment type="function">
    <text evidence="1">RNaseP catalyzes the removal of the 5'-leader sequence from pre-tRNA to produce the mature 5'-terminus. It can also cleave other RNA substrates such as 4.5S RNA. The protein component plays an auxiliary but essential role in vivo by binding to the 5'-leader sequence and broadening the substrate specificity of the ribozyme.</text>
</comment>
<comment type="catalytic activity">
    <reaction evidence="1">
        <text>Endonucleolytic cleavage of RNA, removing 5'-extranucleotides from tRNA precursor.</text>
        <dbReference type="EC" id="3.1.26.5"/>
    </reaction>
</comment>
<comment type="subunit">
    <text evidence="1">Consists of a catalytic RNA component (M1 or rnpB) and a protein subunit.</text>
</comment>
<comment type="similarity">
    <text evidence="1">Belongs to the RnpA family.</text>
</comment>